<protein>
    <recommendedName>
        <fullName>Putative protein ZNF815</fullName>
    </recommendedName>
</protein>
<sequence>MEEEEIRTWSFPEEVWQVATQPDSQQQHEDQHLSHTFLDKKDWTGNELHECNELGKKLHQNPNLLPSKQQVRTRDLCRKSLMCNLDFTPNAYLARRRFQCDGHGNFFSVRNLKLHLQERIHAEVTSVEVL</sequence>
<name>ZN815_HUMAN</name>
<organism>
    <name type="scientific">Homo sapiens</name>
    <name type="common">Human</name>
    <dbReference type="NCBI Taxonomy" id="9606"/>
    <lineage>
        <taxon>Eukaryota</taxon>
        <taxon>Metazoa</taxon>
        <taxon>Chordata</taxon>
        <taxon>Craniata</taxon>
        <taxon>Vertebrata</taxon>
        <taxon>Euteleostomi</taxon>
        <taxon>Mammalia</taxon>
        <taxon>Eutheria</taxon>
        <taxon>Euarchontoglires</taxon>
        <taxon>Primates</taxon>
        <taxon>Haplorrhini</taxon>
        <taxon>Catarrhini</taxon>
        <taxon>Hominidae</taxon>
        <taxon>Homo</taxon>
    </lineage>
</organism>
<feature type="chain" id="PRO_0000342883" description="Putative protein ZNF815">
    <location>
        <begin position="1"/>
        <end position="130"/>
    </location>
</feature>
<reference key="1">
    <citation type="journal article" date="2004" name="Nat. Genet.">
        <title>Complete sequencing and characterization of 21,243 full-length human cDNAs.</title>
        <authorList>
            <person name="Ota T."/>
            <person name="Suzuki Y."/>
            <person name="Nishikawa T."/>
            <person name="Otsuki T."/>
            <person name="Sugiyama T."/>
            <person name="Irie R."/>
            <person name="Wakamatsu A."/>
            <person name="Hayashi K."/>
            <person name="Sato H."/>
            <person name="Nagai K."/>
            <person name="Kimura K."/>
            <person name="Makita H."/>
            <person name="Sekine M."/>
            <person name="Obayashi M."/>
            <person name="Nishi T."/>
            <person name="Shibahara T."/>
            <person name="Tanaka T."/>
            <person name="Ishii S."/>
            <person name="Yamamoto J."/>
            <person name="Saito K."/>
            <person name="Kawai Y."/>
            <person name="Isono Y."/>
            <person name="Nakamura Y."/>
            <person name="Nagahari K."/>
            <person name="Murakami K."/>
            <person name="Yasuda T."/>
            <person name="Iwayanagi T."/>
            <person name="Wagatsuma M."/>
            <person name="Shiratori A."/>
            <person name="Sudo H."/>
            <person name="Hosoiri T."/>
            <person name="Kaku Y."/>
            <person name="Kodaira H."/>
            <person name="Kondo H."/>
            <person name="Sugawara M."/>
            <person name="Takahashi M."/>
            <person name="Kanda K."/>
            <person name="Yokoi T."/>
            <person name="Furuya T."/>
            <person name="Kikkawa E."/>
            <person name="Omura Y."/>
            <person name="Abe K."/>
            <person name="Kamihara K."/>
            <person name="Katsuta N."/>
            <person name="Sato K."/>
            <person name="Tanikawa M."/>
            <person name="Yamazaki M."/>
            <person name="Ninomiya K."/>
            <person name="Ishibashi T."/>
            <person name="Yamashita H."/>
            <person name="Murakawa K."/>
            <person name="Fujimori K."/>
            <person name="Tanai H."/>
            <person name="Kimata M."/>
            <person name="Watanabe M."/>
            <person name="Hiraoka S."/>
            <person name="Chiba Y."/>
            <person name="Ishida S."/>
            <person name="Ono Y."/>
            <person name="Takiguchi S."/>
            <person name="Watanabe S."/>
            <person name="Yosida M."/>
            <person name="Hotuta T."/>
            <person name="Kusano J."/>
            <person name="Kanehori K."/>
            <person name="Takahashi-Fujii A."/>
            <person name="Hara H."/>
            <person name="Tanase T.-O."/>
            <person name="Nomura Y."/>
            <person name="Togiya S."/>
            <person name="Komai F."/>
            <person name="Hara R."/>
            <person name="Takeuchi K."/>
            <person name="Arita M."/>
            <person name="Imose N."/>
            <person name="Musashino K."/>
            <person name="Yuuki H."/>
            <person name="Oshima A."/>
            <person name="Sasaki N."/>
            <person name="Aotsuka S."/>
            <person name="Yoshikawa Y."/>
            <person name="Matsunawa H."/>
            <person name="Ichihara T."/>
            <person name="Shiohata N."/>
            <person name="Sano S."/>
            <person name="Moriya S."/>
            <person name="Momiyama H."/>
            <person name="Satoh N."/>
            <person name="Takami S."/>
            <person name="Terashima Y."/>
            <person name="Suzuki O."/>
            <person name="Nakagawa S."/>
            <person name="Senoh A."/>
            <person name="Mizoguchi H."/>
            <person name="Goto Y."/>
            <person name="Shimizu F."/>
            <person name="Wakebe H."/>
            <person name="Hishigaki H."/>
            <person name="Watanabe T."/>
            <person name="Sugiyama A."/>
            <person name="Takemoto M."/>
            <person name="Kawakami B."/>
            <person name="Yamazaki M."/>
            <person name="Watanabe K."/>
            <person name="Kumagai A."/>
            <person name="Itakura S."/>
            <person name="Fukuzumi Y."/>
            <person name="Fujimori Y."/>
            <person name="Komiyama M."/>
            <person name="Tashiro H."/>
            <person name="Tanigami A."/>
            <person name="Fujiwara T."/>
            <person name="Ono T."/>
            <person name="Yamada K."/>
            <person name="Fujii Y."/>
            <person name="Ozaki K."/>
            <person name="Hirao M."/>
            <person name="Ohmori Y."/>
            <person name="Kawabata A."/>
            <person name="Hikiji T."/>
            <person name="Kobatake N."/>
            <person name="Inagaki H."/>
            <person name="Ikema Y."/>
            <person name="Okamoto S."/>
            <person name="Okitani R."/>
            <person name="Kawakami T."/>
            <person name="Noguchi S."/>
            <person name="Itoh T."/>
            <person name="Shigeta K."/>
            <person name="Senba T."/>
            <person name="Matsumura K."/>
            <person name="Nakajima Y."/>
            <person name="Mizuno T."/>
            <person name="Morinaga M."/>
            <person name="Sasaki M."/>
            <person name="Togashi T."/>
            <person name="Oyama M."/>
            <person name="Hata H."/>
            <person name="Watanabe M."/>
            <person name="Komatsu T."/>
            <person name="Mizushima-Sugano J."/>
            <person name="Satoh T."/>
            <person name="Shirai Y."/>
            <person name="Takahashi Y."/>
            <person name="Nakagawa K."/>
            <person name="Okumura K."/>
            <person name="Nagase T."/>
            <person name="Nomura N."/>
            <person name="Kikuchi H."/>
            <person name="Masuho Y."/>
            <person name="Yamashita R."/>
            <person name="Nakai K."/>
            <person name="Yada T."/>
            <person name="Nakamura Y."/>
            <person name="Ohara O."/>
            <person name="Isogai T."/>
            <person name="Sugano S."/>
        </authorList>
    </citation>
    <scope>NUCLEOTIDE SEQUENCE [LARGE SCALE MRNA]</scope>
</reference>
<reference key="2">
    <citation type="journal article" date="2003" name="Nature">
        <title>The DNA sequence of human chromosome 7.</title>
        <authorList>
            <person name="Hillier L.W."/>
            <person name="Fulton R.S."/>
            <person name="Fulton L.A."/>
            <person name="Graves T.A."/>
            <person name="Pepin K.H."/>
            <person name="Wagner-McPherson C."/>
            <person name="Layman D."/>
            <person name="Maas J."/>
            <person name="Jaeger S."/>
            <person name="Walker R."/>
            <person name="Wylie K."/>
            <person name="Sekhon M."/>
            <person name="Becker M.C."/>
            <person name="O'Laughlin M.D."/>
            <person name="Schaller M.E."/>
            <person name="Fewell G.A."/>
            <person name="Delehaunty K.D."/>
            <person name="Miner T.L."/>
            <person name="Nash W.E."/>
            <person name="Cordes M."/>
            <person name="Du H."/>
            <person name="Sun H."/>
            <person name="Edwards J."/>
            <person name="Bradshaw-Cordum H."/>
            <person name="Ali J."/>
            <person name="Andrews S."/>
            <person name="Isak A."/>
            <person name="Vanbrunt A."/>
            <person name="Nguyen C."/>
            <person name="Du F."/>
            <person name="Lamar B."/>
            <person name="Courtney L."/>
            <person name="Kalicki J."/>
            <person name="Ozersky P."/>
            <person name="Bielicki L."/>
            <person name="Scott K."/>
            <person name="Holmes A."/>
            <person name="Harkins R."/>
            <person name="Harris A."/>
            <person name="Strong C.M."/>
            <person name="Hou S."/>
            <person name="Tomlinson C."/>
            <person name="Dauphin-Kohlberg S."/>
            <person name="Kozlowicz-Reilly A."/>
            <person name="Leonard S."/>
            <person name="Rohlfing T."/>
            <person name="Rock S.M."/>
            <person name="Tin-Wollam A.-M."/>
            <person name="Abbott A."/>
            <person name="Minx P."/>
            <person name="Maupin R."/>
            <person name="Strowmatt C."/>
            <person name="Latreille P."/>
            <person name="Miller N."/>
            <person name="Johnson D."/>
            <person name="Murray J."/>
            <person name="Woessner J.P."/>
            <person name="Wendl M.C."/>
            <person name="Yang S.-P."/>
            <person name="Schultz B.R."/>
            <person name="Wallis J.W."/>
            <person name="Spieth J."/>
            <person name="Bieri T.A."/>
            <person name="Nelson J.O."/>
            <person name="Berkowicz N."/>
            <person name="Wohldmann P.E."/>
            <person name="Cook L.L."/>
            <person name="Hickenbotham M.T."/>
            <person name="Eldred J."/>
            <person name="Williams D."/>
            <person name="Bedell J.A."/>
            <person name="Mardis E.R."/>
            <person name="Clifton S.W."/>
            <person name="Chissoe S.L."/>
            <person name="Marra M.A."/>
            <person name="Raymond C."/>
            <person name="Haugen E."/>
            <person name="Gillett W."/>
            <person name="Zhou Y."/>
            <person name="James R."/>
            <person name="Phelps K."/>
            <person name="Iadanoto S."/>
            <person name="Bubb K."/>
            <person name="Simms E."/>
            <person name="Levy R."/>
            <person name="Clendenning J."/>
            <person name="Kaul R."/>
            <person name="Kent W.J."/>
            <person name="Furey T.S."/>
            <person name="Baertsch R.A."/>
            <person name="Brent M.R."/>
            <person name="Keibler E."/>
            <person name="Flicek P."/>
            <person name="Bork P."/>
            <person name="Suyama M."/>
            <person name="Bailey J.A."/>
            <person name="Portnoy M.E."/>
            <person name="Torrents D."/>
            <person name="Chinwalla A.T."/>
            <person name="Gish W.R."/>
            <person name="Eddy S.R."/>
            <person name="McPherson J.D."/>
            <person name="Olson M.V."/>
            <person name="Eichler E.E."/>
            <person name="Green E.D."/>
            <person name="Waterston R.H."/>
            <person name="Wilson R.K."/>
        </authorList>
    </citation>
    <scope>NUCLEOTIDE SEQUENCE [LARGE SCALE GENOMIC DNA]</scope>
</reference>
<evidence type="ECO:0000305" key="1"/>
<accession>A8K554</accession>
<dbReference type="EMBL" id="AK291169">
    <property type="protein sequence ID" value="BAF83858.1"/>
    <property type="molecule type" value="mRNA"/>
</dbReference>
<dbReference type="EMBL" id="AC004983">
    <property type="status" value="NOT_ANNOTATED_CDS"/>
    <property type="molecule type" value="Genomic_DNA"/>
</dbReference>
<dbReference type="EMBL" id="AC008167">
    <property type="status" value="NOT_ANNOTATED_CDS"/>
    <property type="molecule type" value="Genomic_DNA"/>
</dbReference>
<dbReference type="BioMuta" id="HGNC:22029"/>
<dbReference type="AGR" id="HGNC:22029"/>
<dbReference type="GeneCards" id="ZNF815P"/>
<dbReference type="HGNC" id="HGNC:22029">
    <property type="gene designation" value="ZNF815P"/>
</dbReference>
<dbReference type="neXtProt" id="NX_A8K554"/>
<dbReference type="InParanoid" id="A8K554"/>
<dbReference type="PAN-GO" id="A8K554">
    <property type="GO annotations" value="0 GO annotations based on evolutionary models"/>
</dbReference>
<dbReference type="ChiTaRS" id="ZNF815P">
    <property type="organism name" value="human"/>
</dbReference>
<dbReference type="Pharos" id="A8K554">
    <property type="development level" value="Tdark"/>
</dbReference>
<dbReference type="Proteomes" id="UP000005640">
    <property type="component" value="Unplaced"/>
</dbReference>
<dbReference type="RNAct" id="A8K554">
    <property type="molecule type" value="protein"/>
</dbReference>
<gene>
    <name type="primary">ZNF815P</name>
    <name type="synonym">ZNF815</name>
</gene>
<comment type="caution">
    <text evidence="1">Could be the product of a pseudogene. Despite its name, it does not contain a canonical C2H2-type zinc-finger.</text>
</comment>
<proteinExistence type="uncertain"/>
<keyword id="KW-1185">Reference proteome</keyword>